<comment type="subunit">
    <text evidence="1">Part of the 50S ribosomal subunit. Contacts protein L32.</text>
</comment>
<comment type="similarity">
    <text evidence="1">Belongs to the bacterial ribosomal protein bL17 family.</text>
</comment>
<protein>
    <recommendedName>
        <fullName evidence="1">Large ribosomal subunit protein bL17</fullName>
    </recommendedName>
    <alternativeName>
        <fullName evidence="2">50S ribosomal protein L17</fullName>
    </alternativeName>
</protein>
<dbReference type="EMBL" id="FM204884">
    <property type="protein sequence ID" value="CAW97692.1"/>
    <property type="molecule type" value="Genomic_DNA"/>
</dbReference>
<dbReference type="SMR" id="C0ME32"/>
<dbReference type="KEGG" id="seq:SZO_00770"/>
<dbReference type="eggNOG" id="COG0203">
    <property type="taxonomic scope" value="Bacteria"/>
</dbReference>
<dbReference type="HOGENOM" id="CLU_074407_2_2_9"/>
<dbReference type="Proteomes" id="UP000001368">
    <property type="component" value="Chromosome"/>
</dbReference>
<dbReference type="GO" id="GO:0022625">
    <property type="term" value="C:cytosolic large ribosomal subunit"/>
    <property type="evidence" value="ECO:0007669"/>
    <property type="project" value="TreeGrafter"/>
</dbReference>
<dbReference type="GO" id="GO:0003735">
    <property type="term" value="F:structural constituent of ribosome"/>
    <property type="evidence" value="ECO:0007669"/>
    <property type="project" value="InterPro"/>
</dbReference>
<dbReference type="GO" id="GO:0006412">
    <property type="term" value="P:translation"/>
    <property type="evidence" value="ECO:0007669"/>
    <property type="project" value="UniProtKB-UniRule"/>
</dbReference>
<dbReference type="FunFam" id="3.90.1030.10:FF:000002">
    <property type="entry name" value="50S ribosomal protein L17"/>
    <property type="match status" value="1"/>
</dbReference>
<dbReference type="Gene3D" id="3.90.1030.10">
    <property type="entry name" value="Ribosomal protein L17"/>
    <property type="match status" value="1"/>
</dbReference>
<dbReference type="HAMAP" id="MF_01368">
    <property type="entry name" value="Ribosomal_bL17"/>
    <property type="match status" value="1"/>
</dbReference>
<dbReference type="InterPro" id="IPR000456">
    <property type="entry name" value="Ribosomal_bL17"/>
</dbReference>
<dbReference type="InterPro" id="IPR047859">
    <property type="entry name" value="Ribosomal_bL17_CS"/>
</dbReference>
<dbReference type="InterPro" id="IPR036373">
    <property type="entry name" value="Ribosomal_bL17_sf"/>
</dbReference>
<dbReference type="NCBIfam" id="TIGR00059">
    <property type="entry name" value="L17"/>
    <property type="match status" value="1"/>
</dbReference>
<dbReference type="PANTHER" id="PTHR14413:SF16">
    <property type="entry name" value="LARGE RIBOSOMAL SUBUNIT PROTEIN BL17M"/>
    <property type="match status" value="1"/>
</dbReference>
<dbReference type="PANTHER" id="PTHR14413">
    <property type="entry name" value="RIBOSOMAL PROTEIN L17"/>
    <property type="match status" value="1"/>
</dbReference>
<dbReference type="Pfam" id="PF01196">
    <property type="entry name" value="Ribosomal_L17"/>
    <property type="match status" value="1"/>
</dbReference>
<dbReference type="SUPFAM" id="SSF64263">
    <property type="entry name" value="Prokaryotic ribosomal protein L17"/>
    <property type="match status" value="1"/>
</dbReference>
<dbReference type="PROSITE" id="PS01167">
    <property type="entry name" value="RIBOSOMAL_L17"/>
    <property type="match status" value="1"/>
</dbReference>
<evidence type="ECO:0000255" key="1">
    <source>
        <dbReference type="HAMAP-Rule" id="MF_01368"/>
    </source>
</evidence>
<evidence type="ECO:0000305" key="2"/>
<proteinExistence type="inferred from homology"/>
<keyword id="KW-0687">Ribonucleoprotein</keyword>
<keyword id="KW-0689">Ribosomal protein</keyword>
<gene>
    <name evidence="1" type="primary">rplQ</name>
    <name type="ordered locus">SZO_00770</name>
</gene>
<organism>
    <name type="scientific">Streptococcus equi subsp. zooepidemicus (strain H70)</name>
    <dbReference type="NCBI Taxonomy" id="553483"/>
    <lineage>
        <taxon>Bacteria</taxon>
        <taxon>Bacillati</taxon>
        <taxon>Bacillota</taxon>
        <taxon>Bacilli</taxon>
        <taxon>Lactobacillales</taxon>
        <taxon>Streptococcaceae</taxon>
        <taxon>Streptococcus</taxon>
    </lineage>
</organism>
<reference key="1">
    <citation type="journal article" date="2009" name="PLoS Pathog.">
        <title>Genomic evidence for the evolution of Streptococcus equi: host restriction, increased virulence, and genetic exchange with human pathogens.</title>
        <authorList>
            <person name="Holden M.T.G."/>
            <person name="Heather Z."/>
            <person name="Paillot R."/>
            <person name="Steward K.F."/>
            <person name="Webb K."/>
            <person name="Ainslie F."/>
            <person name="Jourdan T."/>
            <person name="Bason N.C."/>
            <person name="Holroyd N.E."/>
            <person name="Mungall K."/>
            <person name="Quail M.A."/>
            <person name="Sanders M."/>
            <person name="Simmonds M."/>
            <person name="Willey D."/>
            <person name="Brooks K."/>
            <person name="Aanensen D.M."/>
            <person name="Spratt B.G."/>
            <person name="Jolley K.A."/>
            <person name="Maiden M.C.J."/>
            <person name="Kehoe M."/>
            <person name="Chanter N."/>
            <person name="Bentley S.D."/>
            <person name="Robinson C."/>
            <person name="Maskell D.J."/>
            <person name="Parkhill J."/>
            <person name="Waller A.S."/>
        </authorList>
    </citation>
    <scope>NUCLEOTIDE SEQUENCE [LARGE SCALE GENOMIC DNA]</scope>
    <source>
        <strain>H70</strain>
    </source>
</reference>
<feature type="chain" id="PRO_1000215019" description="Large ribosomal subunit protein bL17">
    <location>
        <begin position="1"/>
        <end position="128"/>
    </location>
</feature>
<name>RL17_STRS7</name>
<accession>C0ME32</accession>
<sequence length="128" mass="14495">MAYRKLGRTSSQRKAMLRDLTTDLLINESIVTTEARAKEIRKTVEKMITLGKRGDLHARRQAAAYVRNEIASESYDEATDKYTSTTALQKLFSEIAPRYAERNGGYTRILKTEPRRGDAAPMAIIELV</sequence>